<dbReference type="EC" id="1.3.1.14"/>
<dbReference type="EMBL" id="AP006878">
    <property type="protein sequence ID" value="BAD86449.1"/>
    <property type="molecule type" value="Genomic_DNA"/>
</dbReference>
<dbReference type="RefSeq" id="WP_011251210.1">
    <property type="nucleotide sequence ID" value="NC_006624.1"/>
</dbReference>
<dbReference type="SMR" id="Q5JHR7"/>
<dbReference type="FunCoup" id="Q5JHR7">
    <property type="interactions" value="175"/>
</dbReference>
<dbReference type="STRING" id="69014.TK2260"/>
<dbReference type="EnsemblBacteria" id="BAD86449">
    <property type="protein sequence ID" value="BAD86449"/>
    <property type="gene ID" value="TK2260"/>
</dbReference>
<dbReference type="GeneID" id="3234833"/>
<dbReference type="KEGG" id="tko:TK2260"/>
<dbReference type="PATRIC" id="fig|69014.16.peg.2215"/>
<dbReference type="eggNOG" id="arCOG00603">
    <property type="taxonomic scope" value="Archaea"/>
</dbReference>
<dbReference type="HOGENOM" id="CLU_042042_0_1_2"/>
<dbReference type="InParanoid" id="Q5JHR7"/>
<dbReference type="PhylomeDB" id="Q5JHR7"/>
<dbReference type="UniPathway" id="UPA00070">
    <property type="reaction ID" value="UER00945"/>
</dbReference>
<dbReference type="Proteomes" id="UP000000536">
    <property type="component" value="Chromosome"/>
</dbReference>
<dbReference type="GO" id="GO:0005737">
    <property type="term" value="C:cytoplasm"/>
    <property type="evidence" value="ECO:0000318"/>
    <property type="project" value="GO_Central"/>
</dbReference>
<dbReference type="GO" id="GO:0004589">
    <property type="term" value="F:dihydroorotate dehydrogenase (NAD+) activity"/>
    <property type="evidence" value="ECO:0007669"/>
    <property type="project" value="UniProtKB-EC"/>
</dbReference>
<dbReference type="GO" id="GO:0004152">
    <property type="term" value="F:dihydroorotate dehydrogenase activity"/>
    <property type="evidence" value="ECO:0000318"/>
    <property type="project" value="GO_Central"/>
</dbReference>
<dbReference type="GO" id="GO:0006207">
    <property type="term" value="P:'de novo' pyrimidine nucleobase biosynthetic process"/>
    <property type="evidence" value="ECO:0000318"/>
    <property type="project" value="GO_Central"/>
</dbReference>
<dbReference type="GO" id="GO:0044205">
    <property type="term" value="P:'de novo' UMP biosynthetic process"/>
    <property type="evidence" value="ECO:0007669"/>
    <property type="project" value="UniProtKB-UniRule"/>
</dbReference>
<dbReference type="CDD" id="cd04740">
    <property type="entry name" value="DHOD_1B_like"/>
    <property type="match status" value="1"/>
</dbReference>
<dbReference type="FunFam" id="3.20.20.70:FF:000027">
    <property type="entry name" value="Dihydropyrimidine dehydrogenase [NADP(+)]"/>
    <property type="match status" value="1"/>
</dbReference>
<dbReference type="Gene3D" id="3.20.20.70">
    <property type="entry name" value="Aldolase class I"/>
    <property type="match status" value="1"/>
</dbReference>
<dbReference type="HAMAP" id="MF_00224">
    <property type="entry name" value="DHO_dh_type1"/>
    <property type="match status" value="1"/>
</dbReference>
<dbReference type="InterPro" id="IPR013785">
    <property type="entry name" value="Aldolase_TIM"/>
</dbReference>
<dbReference type="InterPro" id="IPR050074">
    <property type="entry name" value="DHO_dehydrogenase"/>
</dbReference>
<dbReference type="InterPro" id="IPR033888">
    <property type="entry name" value="DHOD_1B"/>
</dbReference>
<dbReference type="InterPro" id="IPR024920">
    <property type="entry name" value="Dihydroorotate_DH_1"/>
</dbReference>
<dbReference type="InterPro" id="IPR012135">
    <property type="entry name" value="Dihydroorotate_DH_1_2"/>
</dbReference>
<dbReference type="InterPro" id="IPR005720">
    <property type="entry name" value="Dihydroorotate_DH_cat"/>
</dbReference>
<dbReference type="InterPro" id="IPR001295">
    <property type="entry name" value="Dihydroorotate_DH_CS"/>
</dbReference>
<dbReference type="InterPro" id="IPR049622">
    <property type="entry name" value="Dihydroorotate_DH_I"/>
</dbReference>
<dbReference type="NCBIfam" id="NF005574">
    <property type="entry name" value="PRK07259.1"/>
    <property type="match status" value="1"/>
</dbReference>
<dbReference type="NCBIfam" id="TIGR01037">
    <property type="entry name" value="pyrD_sub1_fam"/>
    <property type="match status" value="1"/>
</dbReference>
<dbReference type="PANTHER" id="PTHR48109:SF1">
    <property type="entry name" value="DIHYDROOROTATE DEHYDROGENASE (FUMARATE)"/>
    <property type="match status" value="1"/>
</dbReference>
<dbReference type="PANTHER" id="PTHR48109">
    <property type="entry name" value="DIHYDROOROTATE DEHYDROGENASE (QUINONE), MITOCHONDRIAL-RELATED"/>
    <property type="match status" value="1"/>
</dbReference>
<dbReference type="Pfam" id="PF01180">
    <property type="entry name" value="DHO_dh"/>
    <property type="match status" value="1"/>
</dbReference>
<dbReference type="PIRSF" id="PIRSF000164">
    <property type="entry name" value="DHO_oxidase"/>
    <property type="match status" value="1"/>
</dbReference>
<dbReference type="SUPFAM" id="SSF51395">
    <property type="entry name" value="FMN-linked oxidoreductases"/>
    <property type="match status" value="1"/>
</dbReference>
<dbReference type="PROSITE" id="PS00911">
    <property type="entry name" value="DHODEHASE_1"/>
    <property type="match status" value="1"/>
</dbReference>
<dbReference type="PROSITE" id="PS00912">
    <property type="entry name" value="DHODEHASE_2"/>
    <property type="match status" value="1"/>
</dbReference>
<feature type="chain" id="PRO_0000148415" description="Dihydroorotate dehydrogenase B (NAD(+)), catalytic subunit">
    <location>
        <begin position="1"/>
        <end position="302"/>
    </location>
</feature>
<feature type="active site" description="Nucleophile">
    <location>
        <position position="128"/>
    </location>
</feature>
<feature type="binding site" evidence="1">
    <location>
        <position position="23"/>
    </location>
    <ligand>
        <name>FMN</name>
        <dbReference type="ChEBI" id="CHEBI:58210"/>
    </ligand>
</feature>
<feature type="binding site" evidence="1">
    <location>
        <begin position="47"/>
        <end position="48"/>
    </location>
    <ligand>
        <name>FMN</name>
        <dbReference type="ChEBI" id="CHEBI:58210"/>
    </ligand>
</feature>
<feature type="binding site" evidence="1">
    <location>
        <position position="47"/>
    </location>
    <ligand>
        <name>substrate</name>
    </ligand>
</feature>
<feature type="binding site" evidence="1">
    <location>
        <begin position="71"/>
        <end position="75"/>
    </location>
    <ligand>
        <name>substrate</name>
    </ligand>
</feature>
<feature type="binding site" evidence="1">
    <location>
        <position position="125"/>
    </location>
    <ligand>
        <name>FMN</name>
        <dbReference type="ChEBI" id="CHEBI:58210"/>
    </ligand>
</feature>
<feature type="binding site" evidence="1">
    <location>
        <position position="125"/>
    </location>
    <ligand>
        <name>substrate</name>
    </ligand>
</feature>
<feature type="binding site" evidence="1">
    <location>
        <position position="163"/>
    </location>
    <ligand>
        <name>FMN</name>
        <dbReference type="ChEBI" id="CHEBI:58210"/>
    </ligand>
</feature>
<feature type="binding site" evidence="1">
    <location>
        <position position="189"/>
    </location>
    <ligand>
        <name>FMN</name>
        <dbReference type="ChEBI" id="CHEBI:58210"/>
    </ligand>
</feature>
<feature type="binding site" evidence="1">
    <location>
        <begin position="190"/>
        <end position="191"/>
    </location>
    <ligand>
        <name>substrate</name>
    </ligand>
</feature>
<feature type="binding site" evidence="1">
    <location>
        <position position="215"/>
    </location>
    <ligand>
        <name>FMN</name>
        <dbReference type="ChEBI" id="CHEBI:58210"/>
    </ligand>
</feature>
<feature type="binding site" evidence="1">
    <location>
        <begin position="241"/>
        <end position="242"/>
    </location>
    <ligand>
        <name>FMN</name>
        <dbReference type="ChEBI" id="CHEBI:58210"/>
    </ligand>
</feature>
<feature type="binding site" evidence="1">
    <location>
        <begin position="263"/>
        <end position="264"/>
    </location>
    <ligand>
        <name>FMN</name>
        <dbReference type="ChEBI" id="CHEBI:58210"/>
    </ligand>
</feature>
<evidence type="ECO:0000250" key="1"/>
<evidence type="ECO:0000305" key="2"/>
<reference key="1">
    <citation type="journal article" date="2005" name="Genome Res.">
        <title>Complete genome sequence of the hyperthermophilic archaeon Thermococcus kodakaraensis KOD1 and comparison with Pyrococcus genomes.</title>
        <authorList>
            <person name="Fukui T."/>
            <person name="Atomi H."/>
            <person name="Kanai T."/>
            <person name="Matsumi R."/>
            <person name="Fujiwara S."/>
            <person name="Imanaka T."/>
        </authorList>
    </citation>
    <scope>NUCLEOTIDE SEQUENCE [LARGE SCALE GENOMIC DNA]</scope>
    <source>
        <strain>ATCC BAA-918 / JCM 12380 / KOD1</strain>
    </source>
</reference>
<organism>
    <name type="scientific">Thermococcus kodakarensis (strain ATCC BAA-918 / JCM 12380 / KOD1)</name>
    <name type="common">Pyrococcus kodakaraensis (strain KOD1)</name>
    <dbReference type="NCBI Taxonomy" id="69014"/>
    <lineage>
        <taxon>Archaea</taxon>
        <taxon>Methanobacteriati</taxon>
        <taxon>Methanobacteriota</taxon>
        <taxon>Thermococci</taxon>
        <taxon>Thermococcales</taxon>
        <taxon>Thermococcaceae</taxon>
        <taxon>Thermococcus</taxon>
    </lineage>
</organism>
<name>PYRDB_THEKO</name>
<comment type="function">
    <text evidence="1">Catalyzes the conversion of dihydroorotate to orotate with NAD(+) as electron acceptor.</text>
</comment>
<comment type="catalytic activity">
    <reaction>
        <text>(S)-dihydroorotate + NAD(+) = orotate + NADH + H(+)</text>
        <dbReference type="Rhea" id="RHEA:13513"/>
        <dbReference type="ChEBI" id="CHEBI:15378"/>
        <dbReference type="ChEBI" id="CHEBI:30839"/>
        <dbReference type="ChEBI" id="CHEBI:30864"/>
        <dbReference type="ChEBI" id="CHEBI:57540"/>
        <dbReference type="ChEBI" id="CHEBI:57945"/>
        <dbReference type="EC" id="1.3.1.14"/>
    </reaction>
</comment>
<comment type="cofactor">
    <cofactor evidence="1">
        <name>FMN</name>
        <dbReference type="ChEBI" id="CHEBI:58210"/>
    </cofactor>
    <text evidence="1">Binds 1 FMN per subunit.</text>
</comment>
<comment type="pathway">
    <text>Pyrimidine metabolism; UMP biosynthesis via de novo pathway; orotate from (S)-dihydroorotate (NAD(+) route): step 1/1.</text>
</comment>
<comment type="subunit">
    <text evidence="1">Heterotetramer of 2 PyrK and 2 PyrD type B subunits.</text>
</comment>
<comment type="subcellular location">
    <subcellularLocation>
        <location evidence="1">Cytoplasm</location>
    </subcellularLocation>
</comment>
<comment type="similarity">
    <text evidence="2">Belongs to the dihydroorotate dehydrogenase family. Type 1 subfamily.</text>
</comment>
<keyword id="KW-0963">Cytoplasm</keyword>
<keyword id="KW-0285">Flavoprotein</keyword>
<keyword id="KW-0288">FMN</keyword>
<keyword id="KW-0520">NAD</keyword>
<keyword id="KW-0560">Oxidoreductase</keyword>
<keyword id="KW-0665">Pyrimidine biosynthesis</keyword>
<keyword id="KW-1185">Reference proteome</keyword>
<gene>
    <name type="primary">pyrD</name>
    <name type="ordered locus">TK2260</name>
</gene>
<sequence>MTVAKLSINLSGLEFENPLILASGINDKVPEQWIRAHEEGAGGVVTKSIGIEPRKGYDNPTIVELPYGLINAMGLPNPGWKGFLEMVEGYSFDFPLIVSIFGGTPEEFAFLAEKLSEVADAFELNLSCPHAKGYGMEIGQKPENVYAVVKAVKDATDKPVIAKLTPNIDDITKLGLAAENAGADAVSAINTLKAIAIDIYARKPILSNKVGGYSGPGVKPVALRAVYDLARTLDIPVIGIGGITTWQDAVEFLLAGASALQIGTAVSLRGWKVFREINEGIERYLREEGFSSVEEIVGLALE</sequence>
<accession>Q5JHR7</accession>
<proteinExistence type="inferred from homology"/>
<protein>
    <recommendedName>
        <fullName>Dihydroorotate dehydrogenase B (NAD(+)), catalytic subunit</fullName>
        <shortName>DHOD B</shortName>
        <shortName>DHODase B</shortName>
        <shortName>DHOdehase B</shortName>
        <ecNumber>1.3.1.14</ecNumber>
    </recommendedName>
    <alternativeName>
        <fullName>Dihydroorotate oxidase B</fullName>
    </alternativeName>
    <alternativeName>
        <fullName>Orotate reductase (NADH)</fullName>
    </alternativeName>
</protein>